<reference key="1">
    <citation type="journal article" date="2005" name="Cell">
        <title>The ecdysone-induced DHR4 orphan nuclear receptor coordinates growth and maturation in Drosophila.</title>
        <authorList>
            <person name="King-Jones K."/>
            <person name="Charles J.P."/>
            <person name="Lam G."/>
            <person name="Thummel C.S."/>
        </authorList>
    </citation>
    <scope>NUCLEOTIDE SEQUENCE [MRNA]</scope>
    <scope>FUNCTION</scope>
    <scope>SUBCELLULAR LOCATION</scope>
    <scope>TISSUE SPECIFICITY</scope>
    <scope>DISRUPTION PHENOTYPE</scope>
    <source>
        <tissue>Embryo</tissue>
    </source>
</reference>
<reference key="2">
    <citation type="journal article" date="2000" name="Science">
        <title>The genome sequence of Drosophila melanogaster.</title>
        <authorList>
            <person name="Adams M.D."/>
            <person name="Celniker S.E."/>
            <person name="Holt R.A."/>
            <person name="Evans C.A."/>
            <person name="Gocayne J.D."/>
            <person name="Amanatides P.G."/>
            <person name="Scherer S.E."/>
            <person name="Li P.W."/>
            <person name="Hoskins R.A."/>
            <person name="Galle R.F."/>
            <person name="George R.A."/>
            <person name="Lewis S.E."/>
            <person name="Richards S."/>
            <person name="Ashburner M."/>
            <person name="Henderson S.N."/>
            <person name="Sutton G.G."/>
            <person name="Wortman J.R."/>
            <person name="Yandell M.D."/>
            <person name="Zhang Q."/>
            <person name="Chen L.X."/>
            <person name="Brandon R.C."/>
            <person name="Rogers Y.-H.C."/>
            <person name="Blazej R.G."/>
            <person name="Champe M."/>
            <person name="Pfeiffer B.D."/>
            <person name="Wan K.H."/>
            <person name="Doyle C."/>
            <person name="Baxter E.G."/>
            <person name="Helt G."/>
            <person name="Nelson C.R."/>
            <person name="Miklos G.L.G."/>
            <person name="Abril J.F."/>
            <person name="Agbayani A."/>
            <person name="An H.-J."/>
            <person name="Andrews-Pfannkoch C."/>
            <person name="Baldwin D."/>
            <person name="Ballew R.M."/>
            <person name="Basu A."/>
            <person name="Baxendale J."/>
            <person name="Bayraktaroglu L."/>
            <person name="Beasley E.M."/>
            <person name="Beeson K.Y."/>
            <person name="Benos P.V."/>
            <person name="Berman B.P."/>
            <person name="Bhandari D."/>
            <person name="Bolshakov S."/>
            <person name="Borkova D."/>
            <person name="Botchan M.R."/>
            <person name="Bouck J."/>
            <person name="Brokstein P."/>
            <person name="Brottier P."/>
            <person name="Burtis K.C."/>
            <person name="Busam D.A."/>
            <person name="Butler H."/>
            <person name="Cadieu E."/>
            <person name="Center A."/>
            <person name="Chandra I."/>
            <person name="Cherry J.M."/>
            <person name="Cawley S."/>
            <person name="Dahlke C."/>
            <person name="Davenport L.B."/>
            <person name="Davies P."/>
            <person name="de Pablos B."/>
            <person name="Delcher A."/>
            <person name="Deng Z."/>
            <person name="Mays A.D."/>
            <person name="Dew I."/>
            <person name="Dietz S.M."/>
            <person name="Dodson K."/>
            <person name="Doup L.E."/>
            <person name="Downes M."/>
            <person name="Dugan-Rocha S."/>
            <person name="Dunkov B.C."/>
            <person name="Dunn P."/>
            <person name="Durbin K.J."/>
            <person name="Evangelista C.C."/>
            <person name="Ferraz C."/>
            <person name="Ferriera S."/>
            <person name="Fleischmann W."/>
            <person name="Fosler C."/>
            <person name="Gabrielian A.E."/>
            <person name="Garg N.S."/>
            <person name="Gelbart W.M."/>
            <person name="Glasser K."/>
            <person name="Glodek A."/>
            <person name="Gong F."/>
            <person name="Gorrell J.H."/>
            <person name="Gu Z."/>
            <person name="Guan P."/>
            <person name="Harris M."/>
            <person name="Harris N.L."/>
            <person name="Harvey D.A."/>
            <person name="Heiman T.J."/>
            <person name="Hernandez J.R."/>
            <person name="Houck J."/>
            <person name="Hostin D."/>
            <person name="Houston K.A."/>
            <person name="Howland T.J."/>
            <person name="Wei M.-H."/>
            <person name="Ibegwam C."/>
            <person name="Jalali M."/>
            <person name="Kalush F."/>
            <person name="Karpen G.H."/>
            <person name="Ke Z."/>
            <person name="Kennison J.A."/>
            <person name="Ketchum K.A."/>
            <person name="Kimmel B.E."/>
            <person name="Kodira C.D."/>
            <person name="Kraft C.L."/>
            <person name="Kravitz S."/>
            <person name="Kulp D."/>
            <person name="Lai Z."/>
            <person name="Lasko P."/>
            <person name="Lei Y."/>
            <person name="Levitsky A.A."/>
            <person name="Li J.H."/>
            <person name="Li Z."/>
            <person name="Liang Y."/>
            <person name="Lin X."/>
            <person name="Liu X."/>
            <person name="Mattei B."/>
            <person name="McIntosh T.C."/>
            <person name="McLeod M.P."/>
            <person name="McPherson D."/>
            <person name="Merkulov G."/>
            <person name="Milshina N.V."/>
            <person name="Mobarry C."/>
            <person name="Morris J."/>
            <person name="Moshrefi A."/>
            <person name="Mount S.M."/>
            <person name="Moy M."/>
            <person name="Murphy B."/>
            <person name="Murphy L."/>
            <person name="Muzny D.M."/>
            <person name="Nelson D.L."/>
            <person name="Nelson D.R."/>
            <person name="Nelson K.A."/>
            <person name="Nixon K."/>
            <person name="Nusskern D.R."/>
            <person name="Pacleb J.M."/>
            <person name="Palazzolo M."/>
            <person name="Pittman G.S."/>
            <person name="Pan S."/>
            <person name="Pollard J."/>
            <person name="Puri V."/>
            <person name="Reese M.G."/>
            <person name="Reinert K."/>
            <person name="Remington K."/>
            <person name="Saunders R.D.C."/>
            <person name="Scheeler F."/>
            <person name="Shen H."/>
            <person name="Shue B.C."/>
            <person name="Siden-Kiamos I."/>
            <person name="Simpson M."/>
            <person name="Skupski M.P."/>
            <person name="Smith T.J."/>
            <person name="Spier E."/>
            <person name="Spradling A.C."/>
            <person name="Stapleton M."/>
            <person name="Strong R."/>
            <person name="Sun E."/>
            <person name="Svirskas R."/>
            <person name="Tector C."/>
            <person name="Turner R."/>
            <person name="Venter E."/>
            <person name="Wang A.H."/>
            <person name="Wang X."/>
            <person name="Wang Z.-Y."/>
            <person name="Wassarman D.A."/>
            <person name="Weinstock G.M."/>
            <person name="Weissenbach J."/>
            <person name="Williams S.M."/>
            <person name="Woodage T."/>
            <person name="Worley K.C."/>
            <person name="Wu D."/>
            <person name="Yang S."/>
            <person name="Yao Q.A."/>
            <person name="Ye J."/>
            <person name="Yeh R.-F."/>
            <person name="Zaveri J.S."/>
            <person name="Zhan M."/>
            <person name="Zhang G."/>
            <person name="Zhao Q."/>
            <person name="Zheng L."/>
            <person name="Zheng X.H."/>
            <person name="Zhong F.N."/>
            <person name="Zhong W."/>
            <person name="Zhou X."/>
            <person name="Zhu S.C."/>
            <person name="Zhu X."/>
            <person name="Smith H.O."/>
            <person name="Gibbs R.A."/>
            <person name="Myers E.W."/>
            <person name="Rubin G.M."/>
            <person name="Venter J.C."/>
        </authorList>
    </citation>
    <scope>NUCLEOTIDE SEQUENCE [LARGE SCALE GENOMIC DNA]</scope>
    <source>
        <strain evidence="5">Berkeley</strain>
    </source>
</reference>
<reference evidence="8" key="3">
    <citation type="journal article" date="2002" name="Genome Biol.">
        <title>Annotation of the Drosophila melanogaster euchromatic genome: a systematic review.</title>
        <authorList>
            <person name="Misra S."/>
            <person name="Crosby M.A."/>
            <person name="Mungall C.J."/>
            <person name="Matthews B.B."/>
            <person name="Campbell K.S."/>
            <person name="Hradecky P."/>
            <person name="Huang Y."/>
            <person name="Kaminker J.S."/>
            <person name="Millburn G.H."/>
            <person name="Prochnik S.E."/>
            <person name="Smith C.D."/>
            <person name="Tupy J.L."/>
            <person name="Whitfield E.J."/>
            <person name="Bayraktaroglu L."/>
            <person name="Berman B.P."/>
            <person name="Bettencourt B.R."/>
            <person name="Celniker S.E."/>
            <person name="de Grey A.D.N.J."/>
            <person name="Drysdale R.A."/>
            <person name="Harris N.L."/>
            <person name="Richter J."/>
            <person name="Russo S."/>
            <person name="Schroeder A.J."/>
            <person name="Shu S.Q."/>
            <person name="Stapleton M."/>
            <person name="Yamada C."/>
            <person name="Ashburner M."/>
            <person name="Gelbart W.M."/>
            <person name="Rubin G.M."/>
            <person name="Lewis S.E."/>
        </authorList>
    </citation>
    <scope>GENOME REANNOTATION</scope>
    <source>
        <strain>Berkeley</strain>
    </source>
</reference>
<reference evidence="9" key="4">
    <citation type="journal article" date="2000" name="Science">
        <title>From sequence to chromosome: the tip of the X chromosome of D. melanogaster.</title>
        <authorList>
            <person name="Benos P.V."/>
            <person name="Gatt M.K."/>
            <person name="Ashburner M."/>
            <person name="Murphy L."/>
            <person name="Harris D."/>
            <person name="Barrell B.G."/>
            <person name="Ferraz C."/>
            <person name="Vidal S."/>
            <person name="Brun C."/>
            <person name="Demailles J."/>
            <person name="Cadieu E."/>
            <person name="Dreano S."/>
            <person name="Gloux S."/>
            <person name="Lelaure V."/>
            <person name="Mottier S."/>
            <person name="Galibert F."/>
            <person name="Borkova D."/>
            <person name="Minana B."/>
            <person name="Kafatos F.C."/>
            <person name="Louis C."/>
            <person name="Siden-Kiamos I."/>
            <person name="Bolshakov S."/>
            <person name="Papagiannakis G."/>
            <person name="Spanos L."/>
            <person name="Cox S."/>
            <person name="Madueno E."/>
            <person name="de Pablos B."/>
            <person name="Modolell J."/>
            <person name="Peter A."/>
            <person name="Schoettler P."/>
            <person name="Werner M."/>
            <person name="Mourkioti F."/>
            <person name="Beinert N."/>
            <person name="Dowe G."/>
            <person name="Schaefer U."/>
            <person name="Jaeckle H."/>
            <person name="Bucheton A."/>
            <person name="Callister D.M."/>
            <person name="Campbell L.A."/>
            <person name="Darlamitsou A."/>
            <person name="Henderson N.S."/>
            <person name="McMillan P.J."/>
            <person name="Salles C."/>
            <person name="Tait E.A."/>
            <person name="Valenti P."/>
            <person name="Saunders R.D.C."/>
            <person name="Glover D.M."/>
        </authorList>
    </citation>
    <scope>NUCLEOTIDE SEQUENCE [LARGE SCALE GENOMIC DNA]</scope>
    <source>
        <strain evidence="6">Oregon-R</strain>
    </source>
</reference>
<protein>
    <recommendedName>
        <fullName>Hormone receptor 4</fullName>
        <shortName>dHR4</shortName>
    </recommendedName>
    <alternativeName>
        <fullName>Nuclear receptor subfamily 6 group A member 2</fullName>
    </alternativeName>
</protein>
<gene>
    <name type="primary">Hr4</name>
    <name type="synonym">NR6A2</name>
    <name type="ORF">CG43934</name>
</gene>
<sequence>MTLSRGPYSELDKMSLFQDLKLKRRKIDSRCSSDGESIADTSTSSPDLLAPMSPKLCDSGSAGASLGASLPLPLALPLPMALPLPMSLPLPLTAASSAVTVSLAAVVAAVAETGGAGAGGAGTAVTASGAGPCVSTSSTTAAAATSSTSSLSSSSSSSSSTSSSTSSASPTAGASSTATCPASSSSSSGNGSGGKSGSIKQEHTEIHSSSSAISAAAASTVMSPPPAEATRSSPATPEGGGPAGDGSGATGGGNTSGGSTAGVAINEHQNNGNGSGGSSRASPDSLEEKPSTTTTTGRPTLTPTNGVLSSASAGTGISTGSSAKLSEAGMSVIRSVKEERLLNVSSKMLVFHQQREQETKAVAAAAAAAAAGHVTVLVTPSRIKSEPPPPASPSSTSSTQRERERERDRERDRERERERDRDREREREQSISSSQQHLSRVSASPPTQLSHGSLGPNIVQTHHLHQQLTQPLTLRKSSPPTEHLLSQSMQHLTQQQAIHLHHLLGQQQQQQQASHPQQQQQQQHSPHSLVRVKKEPNVGQRHLSPHHQQQSPLLQHHQQQQQQQQQQQQHLHQQQQQQQHHQQQPQALALMHPASLALRNSNRDAAILFRVKSEVHQQVAAGLPHLMQSAGGAAAAAAAAVAAQRMVCFSNARINGVKPEVIGGPLGNLRPVGVGGGNGSGSVQCPSPHPSSSSSSSQLSPQTPSQTPPRGTPTVIMGESCGVRTMVWGYEPPPPSAGQSHGQHPQQQQQSPHHQPQQQQQQQQQQSQQQQQQQQQQSLGQQQHCLSSPSAGSLTPSSSSGGGSVSGGGVGGPLTPSSVAPQNNEEAAQLLLSLGQTRIQDMRSRPHPFRTPHALNMERLWAGDYSQLPPGQLQALNLSAQQQQWGSSNSTGLGGVGGGMGGRNLEAPHEPTDEDEQPLVCMICEDKATGLHYGIITCEGCKGFFKRTVQNRRVYTCVADGTCEITKAQRNRCQYCRFKKCIEQGMVLQAVREDRMPGGRNSGAVYNLYKVKYKKHKKTNQKQQQQAAQQQQQQAAAQQQHQQQQQHQQHQQHQQQQLHSPLHHHHHQGHQSHHAQQQHHPQLSPHHLLSPQQQQLAAAVAAAAQHQQQQQQQQQQQQQAKLMGGVVDMKPMFLGPALKPELLQAPPMHSPAQQQQQQQQQQQQQQASPHLSLSSPHQQQQQQQGQHQNHHQQQGGGGGGAGGGAQLPPHLVNGTILKTALTNPSEIVHLRHRLDSAVSSSKDRQISYEHALGMIQTLIDCDAMEDIATLPHFSEFLEDKSEISEKLCNIGDSIVHKLVSWTKKLPFYLEIPVEIHTKLLTDKWHEILILTTAAYQALHGKRRGEGGGSRHGSPASTPLSTPTGTPLSTPIPSPAQPLHKDDPEFVSEVNSHLSTLQTCLTTLMGQPIAMEQLKLDVGHMVDKMTQITIMFRRIKLKMEEYVCLKVYILLNKEVELESIQERYVQVLRSYLQNSSPQNPQARLSELLSHIPEIQAAASLLLESKMFYVPFVLNSASIR</sequence>
<comment type="function">
    <text evidence="7">Coordinates growth and maturation by mediating endocrine responses to the attainment of critical weight during larval development. Plays a central role in the genetic cascades triggered by the steroid hormone ecdysone at the onset of metamorphosis, acting as both a repressor of the early ecdysone-induced regulatory genes and an inducer of the ftz-f1 midprepupal competence factor.</text>
</comment>
<comment type="subcellular location">
    <subcellularLocation>
        <location evidence="2 7">Nucleus</location>
    </subcellularLocation>
</comment>
<comment type="tissue specificity">
    <text evidence="7">During L2 and L3 stages, strong constitutive expression is seen in the ring gland. Lower expression is detected in specific neurons of the central nervous system (CNS) (at protein level).</text>
</comment>
<comment type="disruption phenotype">
    <text evidence="7">Flies exhibit larvae that precociously leave the food to form premature prepupae, resulting in abbreviated larval development that translates directly into smaller and lighter animals.</text>
</comment>
<comment type="similarity">
    <text evidence="1">Belongs to the nuclear hormone receptor family. NR1 subfamily.</text>
</comment>
<comment type="sequence caution" evidence="8">
    <conflict type="erroneous gene model prediction">
        <sequence resource="EMBL-CDS" id="CAA22836"/>
    </conflict>
</comment>
<accession>Q9W539</accession>
<accession>O96836</accession>
<accession>Q56AW0</accession>
<dbReference type="EMBL" id="AY971884">
    <property type="protein sequence ID" value="AAX73355.1"/>
    <property type="molecule type" value="mRNA"/>
</dbReference>
<dbReference type="EMBL" id="AE014298">
    <property type="protein sequence ID" value="ABC67166.1"/>
    <property type="molecule type" value="Genomic_DNA"/>
</dbReference>
<dbReference type="EMBL" id="AL035245">
    <property type="protein sequence ID" value="CAA22836.1"/>
    <property type="status" value="ALT_SEQ"/>
    <property type="molecule type" value="Genomic_DNA"/>
</dbReference>
<dbReference type="RefSeq" id="NP_001033823.1">
    <property type="nucleotide sequence ID" value="NM_001038734.2"/>
</dbReference>
<dbReference type="BioGRID" id="57707">
    <property type="interactions" value="10"/>
</dbReference>
<dbReference type="FunCoup" id="Q9W539">
    <property type="interactions" value="123"/>
</dbReference>
<dbReference type="STRING" id="7227.FBpp0305535"/>
<dbReference type="GlyGen" id="Q9W539">
    <property type="glycosylation" value="2 sites"/>
</dbReference>
<dbReference type="PaxDb" id="7227-FBpp0305529"/>
<dbReference type="EnsemblMetazoa" id="FBtr0333341">
    <property type="protein sequence ID" value="FBpp0305533"/>
    <property type="gene ID" value="FBgn0264562"/>
</dbReference>
<dbReference type="GeneID" id="31162"/>
<dbReference type="KEGG" id="dme:Dmel_CG43934"/>
<dbReference type="UCSC" id="CG16902-RC">
    <property type="organism name" value="d. melanogaster"/>
</dbReference>
<dbReference type="AGR" id="FB:FBgn0264562"/>
<dbReference type="CTD" id="31162"/>
<dbReference type="FlyBase" id="FBgn0264562">
    <property type="gene designation" value="Hr4"/>
</dbReference>
<dbReference type="VEuPathDB" id="VectorBase:FBgn0264562"/>
<dbReference type="eggNOG" id="KOG3575">
    <property type="taxonomic scope" value="Eukaryota"/>
</dbReference>
<dbReference type="GeneTree" id="ENSGT00940000157936"/>
<dbReference type="HOGENOM" id="CLU_001479_0_0_1"/>
<dbReference type="InParanoid" id="Q9W539"/>
<dbReference type="OrthoDB" id="10006908at2759"/>
<dbReference type="PhylomeDB" id="Q9W539"/>
<dbReference type="Reactome" id="R-DME-383280">
    <property type="pathway name" value="Nuclear Receptor transcription pathway"/>
</dbReference>
<dbReference type="BioGRID-ORCS" id="31162">
    <property type="hits" value="0 hits in 1 CRISPR screen"/>
</dbReference>
<dbReference type="GenomeRNAi" id="31162"/>
<dbReference type="PRO" id="PR:Q9W539"/>
<dbReference type="Proteomes" id="UP000000803">
    <property type="component" value="Chromosome X"/>
</dbReference>
<dbReference type="Bgee" id="FBgn0264562">
    <property type="expression patterns" value="Expressed in nurse follicle cell (Drosophila) in ovary and 147 other cell types or tissues"/>
</dbReference>
<dbReference type="ExpressionAtlas" id="Q9W539">
    <property type="expression patterns" value="baseline and differential"/>
</dbReference>
<dbReference type="GO" id="GO:0000785">
    <property type="term" value="C:chromatin"/>
    <property type="evidence" value="ECO:0000318"/>
    <property type="project" value="GO_Central"/>
</dbReference>
<dbReference type="GO" id="GO:0005737">
    <property type="term" value="C:cytoplasm"/>
    <property type="evidence" value="ECO:0000314"/>
    <property type="project" value="UniProtKB"/>
</dbReference>
<dbReference type="GO" id="GO:0005634">
    <property type="term" value="C:nucleus"/>
    <property type="evidence" value="ECO:0000314"/>
    <property type="project" value="UniProtKB"/>
</dbReference>
<dbReference type="GO" id="GO:0034056">
    <property type="term" value="F:estrogen response element binding"/>
    <property type="evidence" value="ECO:0000318"/>
    <property type="project" value="GO_Central"/>
</dbReference>
<dbReference type="GO" id="GO:0004879">
    <property type="term" value="F:nuclear receptor activity"/>
    <property type="evidence" value="ECO:0000315"/>
    <property type="project" value="UniProtKB"/>
</dbReference>
<dbReference type="GO" id="GO:0008270">
    <property type="term" value="F:zinc ion binding"/>
    <property type="evidence" value="ECO:0007669"/>
    <property type="project" value="UniProtKB-KW"/>
</dbReference>
<dbReference type="GO" id="GO:0071456">
    <property type="term" value="P:cellular response to hypoxia"/>
    <property type="evidence" value="ECO:0000315"/>
    <property type="project" value="FlyBase"/>
</dbReference>
<dbReference type="GO" id="GO:0120143">
    <property type="term" value="P:negative regulation of ecdysone receptor signaling pathway"/>
    <property type="evidence" value="ECO:0000315"/>
    <property type="project" value="UniProtKB"/>
</dbReference>
<dbReference type="GO" id="GO:0040018">
    <property type="term" value="P:positive regulation of multicellular organism growth"/>
    <property type="evidence" value="ECO:0000315"/>
    <property type="project" value="UniProtKB"/>
</dbReference>
<dbReference type="GO" id="GO:0048638">
    <property type="term" value="P:regulation of developmental growth"/>
    <property type="evidence" value="ECO:0000315"/>
    <property type="project" value="FlyBase"/>
</dbReference>
<dbReference type="GO" id="GO:0106023">
    <property type="term" value="P:regulation of pupariation"/>
    <property type="evidence" value="ECO:0000315"/>
    <property type="project" value="UniProtKB"/>
</dbReference>
<dbReference type="GO" id="GO:0006357">
    <property type="term" value="P:regulation of transcription by RNA polymerase II"/>
    <property type="evidence" value="ECO:0000318"/>
    <property type="project" value="GO_Central"/>
</dbReference>
<dbReference type="CDD" id="cd07168">
    <property type="entry name" value="NR_DBD_DHR4_like"/>
    <property type="match status" value="1"/>
</dbReference>
<dbReference type="CDD" id="cd06953">
    <property type="entry name" value="NR_LBD_DHR4_like"/>
    <property type="match status" value="1"/>
</dbReference>
<dbReference type="FunFam" id="3.30.50.10:FF:000006">
    <property type="entry name" value="Nuclear receptor subfamily 5 group A member"/>
    <property type="match status" value="1"/>
</dbReference>
<dbReference type="Gene3D" id="3.30.50.10">
    <property type="entry name" value="Erythroid Transcription Factor GATA-1, subunit A"/>
    <property type="match status" value="1"/>
</dbReference>
<dbReference type="Gene3D" id="1.10.565.10">
    <property type="entry name" value="Retinoid X Receptor"/>
    <property type="match status" value="1"/>
</dbReference>
<dbReference type="InterPro" id="IPR035500">
    <property type="entry name" value="NHR-like_dom_sf"/>
</dbReference>
<dbReference type="InterPro" id="IPR000536">
    <property type="entry name" value="Nucl_hrmn_rcpt_lig-bd"/>
</dbReference>
<dbReference type="InterPro" id="IPR050200">
    <property type="entry name" value="Nuclear_hormone_rcpt_NR3"/>
</dbReference>
<dbReference type="InterPro" id="IPR001723">
    <property type="entry name" value="Nuclear_hrmn_rcpt"/>
</dbReference>
<dbReference type="InterPro" id="IPR001628">
    <property type="entry name" value="Znf_hrmn_rcpt"/>
</dbReference>
<dbReference type="InterPro" id="IPR013088">
    <property type="entry name" value="Znf_NHR/GATA"/>
</dbReference>
<dbReference type="PANTHER" id="PTHR48092">
    <property type="entry name" value="KNIRPS-RELATED PROTEIN-RELATED"/>
    <property type="match status" value="1"/>
</dbReference>
<dbReference type="Pfam" id="PF00104">
    <property type="entry name" value="Hormone_recep"/>
    <property type="match status" value="1"/>
</dbReference>
<dbReference type="Pfam" id="PF00105">
    <property type="entry name" value="zf-C4"/>
    <property type="match status" value="1"/>
</dbReference>
<dbReference type="PRINTS" id="PR00398">
    <property type="entry name" value="STRDHORMONER"/>
</dbReference>
<dbReference type="PRINTS" id="PR00047">
    <property type="entry name" value="STROIDFINGER"/>
</dbReference>
<dbReference type="SMART" id="SM00430">
    <property type="entry name" value="HOLI"/>
    <property type="match status" value="1"/>
</dbReference>
<dbReference type="SMART" id="SM00399">
    <property type="entry name" value="ZnF_C4"/>
    <property type="match status" value="1"/>
</dbReference>
<dbReference type="SUPFAM" id="SSF57716">
    <property type="entry name" value="Glucocorticoid receptor-like (DNA-binding domain)"/>
    <property type="match status" value="1"/>
</dbReference>
<dbReference type="SUPFAM" id="SSF48508">
    <property type="entry name" value="Nuclear receptor ligand-binding domain"/>
    <property type="match status" value="1"/>
</dbReference>
<dbReference type="PROSITE" id="PS51843">
    <property type="entry name" value="NR_LBD"/>
    <property type="match status" value="1"/>
</dbReference>
<dbReference type="PROSITE" id="PS00031">
    <property type="entry name" value="NUCLEAR_REC_DBD_1"/>
    <property type="match status" value="1"/>
</dbReference>
<dbReference type="PROSITE" id="PS51030">
    <property type="entry name" value="NUCLEAR_REC_DBD_2"/>
    <property type="match status" value="1"/>
</dbReference>
<keyword id="KW-0238">DNA-binding</keyword>
<keyword id="KW-0479">Metal-binding</keyword>
<keyword id="KW-0539">Nucleus</keyword>
<keyword id="KW-0675">Receptor</keyword>
<keyword id="KW-1185">Reference proteome</keyword>
<keyword id="KW-0804">Transcription</keyword>
<keyword id="KW-0805">Transcription regulation</keyword>
<keyword id="KW-0862">Zinc</keyword>
<keyword id="KW-0863">Zinc-finger</keyword>
<feature type="chain" id="PRO_0000053522" description="Hormone receptor 4">
    <location>
        <begin position="1"/>
        <end position="1518"/>
    </location>
</feature>
<feature type="domain" description="NR LBD" evidence="3">
    <location>
        <begin position="1250"/>
        <end position="1518"/>
    </location>
</feature>
<feature type="DNA-binding region" description="Nuclear receptor" evidence="2">
    <location>
        <begin position="918"/>
        <end position="993"/>
    </location>
</feature>
<feature type="zinc finger region" description="NR C4-type" evidence="2">
    <location>
        <begin position="921"/>
        <end position="941"/>
    </location>
</feature>
<feature type="zinc finger region" description="NR C4-type" evidence="2">
    <location>
        <begin position="957"/>
        <end position="976"/>
    </location>
</feature>
<feature type="region of interest" description="Disordered" evidence="4">
    <location>
        <begin position="30"/>
        <end position="50"/>
    </location>
</feature>
<feature type="region of interest" description="Disordered" evidence="4">
    <location>
        <begin position="145"/>
        <end position="327"/>
    </location>
</feature>
<feature type="region of interest" description="Disordered" evidence="4">
    <location>
        <begin position="380"/>
        <end position="587"/>
    </location>
</feature>
<feature type="region of interest" description="Disordered" evidence="4">
    <location>
        <begin position="672"/>
        <end position="820"/>
    </location>
</feature>
<feature type="region of interest" description="Disordered" evidence="4">
    <location>
        <begin position="887"/>
        <end position="913"/>
    </location>
</feature>
<feature type="region of interest" description="Disordered" evidence="4">
    <location>
        <begin position="1015"/>
        <end position="1101"/>
    </location>
</feature>
<feature type="region of interest" description="Disordered" evidence="4">
    <location>
        <begin position="1142"/>
        <end position="1210"/>
    </location>
</feature>
<feature type="region of interest" description="Disordered" evidence="4">
    <location>
        <begin position="1341"/>
        <end position="1371"/>
    </location>
</feature>
<feature type="compositionally biased region" description="Polar residues" evidence="4">
    <location>
        <begin position="34"/>
        <end position="46"/>
    </location>
</feature>
<feature type="compositionally biased region" description="Low complexity" evidence="4">
    <location>
        <begin position="145"/>
        <end position="189"/>
    </location>
</feature>
<feature type="compositionally biased region" description="Low complexity" evidence="4">
    <location>
        <begin position="208"/>
        <end position="219"/>
    </location>
</feature>
<feature type="compositionally biased region" description="Gly residues" evidence="4">
    <location>
        <begin position="238"/>
        <end position="260"/>
    </location>
</feature>
<feature type="compositionally biased region" description="Low complexity" evidence="4">
    <location>
        <begin position="291"/>
        <end position="323"/>
    </location>
</feature>
<feature type="compositionally biased region" description="Basic and acidic residues" evidence="4">
    <location>
        <begin position="400"/>
        <end position="429"/>
    </location>
</feature>
<feature type="compositionally biased region" description="Polar residues" evidence="4">
    <location>
        <begin position="430"/>
        <end position="451"/>
    </location>
</feature>
<feature type="compositionally biased region" description="Polar residues" evidence="4">
    <location>
        <begin position="475"/>
        <end position="489"/>
    </location>
</feature>
<feature type="compositionally biased region" description="Low complexity" evidence="4">
    <location>
        <begin position="490"/>
        <end position="529"/>
    </location>
</feature>
<feature type="compositionally biased region" description="Low complexity" evidence="4">
    <location>
        <begin position="546"/>
        <end position="586"/>
    </location>
</feature>
<feature type="compositionally biased region" description="Low complexity" evidence="4">
    <location>
        <begin position="681"/>
        <end position="705"/>
    </location>
</feature>
<feature type="compositionally biased region" description="Low complexity" evidence="4">
    <location>
        <begin position="738"/>
        <end position="799"/>
    </location>
</feature>
<feature type="compositionally biased region" description="Gly residues" evidence="4">
    <location>
        <begin position="800"/>
        <end position="812"/>
    </location>
</feature>
<feature type="compositionally biased region" description="Gly residues" evidence="4">
    <location>
        <begin position="892"/>
        <end position="902"/>
    </location>
</feature>
<feature type="compositionally biased region" description="Low complexity" evidence="4">
    <location>
        <begin position="1021"/>
        <end position="1060"/>
    </location>
</feature>
<feature type="compositionally biased region" description="Basic residues" evidence="4">
    <location>
        <begin position="1061"/>
        <end position="1077"/>
    </location>
</feature>
<feature type="compositionally biased region" description="Low complexity" evidence="4">
    <location>
        <begin position="1078"/>
        <end position="1101"/>
    </location>
</feature>
<feature type="compositionally biased region" description="Low complexity" evidence="4">
    <location>
        <begin position="1144"/>
        <end position="1193"/>
    </location>
</feature>
<feature type="compositionally biased region" description="Gly residues" evidence="4">
    <location>
        <begin position="1194"/>
        <end position="1205"/>
    </location>
</feature>
<feature type="compositionally biased region" description="Low complexity" evidence="4">
    <location>
        <begin position="1351"/>
        <end position="1368"/>
    </location>
</feature>
<feature type="sequence conflict" description="In Ref. 1; CAA22836." evidence="8" ref="1">
    <original>T</original>
    <variation>R</variation>
    <location>
        <position position="140"/>
    </location>
</feature>
<feature type="sequence conflict" description="In Ref. 1; CAA22836." evidence="8" ref="1">
    <original>A</original>
    <variation>R</variation>
    <location>
        <position position="144"/>
    </location>
</feature>
<feature type="sequence conflict" description="In Ref. 1; CAA22836." evidence="8" ref="1">
    <original>I</original>
    <variation>V</variation>
    <location>
        <position position="213"/>
    </location>
</feature>
<feature type="sequence conflict" description="In Ref. 1; CAA22836." evidence="8" ref="1">
    <original>K</original>
    <variation>KA</variation>
    <location>
        <position position="1452"/>
    </location>
</feature>
<evidence type="ECO:0000255" key="1"/>
<evidence type="ECO:0000255" key="2">
    <source>
        <dbReference type="PROSITE-ProRule" id="PRU00407"/>
    </source>
</evidence>
<evidence type="ECO:0000255" key="3">
    <source>
        <dbReference type="PROSITE-ProRule" id="PRU01189"/>
    </source>
</evidence>
<evidence type="ECO:0000256" key="4">
    <source>
        <dbReference type="SAM" id="MobiDB-lite"/>
    </source>
</evidence>
<evidence type="ECO:0000269" key="5">
    <source>
    </source>
</evidence>
<evidence type="ECO:0000269" key="6">
    <source>
    </source>
</evidence>
<evidence type="ECO:0000269" key="7">
    <source>
    </source>
</evidence>
<evidence type="ECO:0000305" key="8"/>
<evidence type="ECO:0000312" key="9">
    <source>
        <dbReference type="EMBL" id="CAA22836.1"/>
    </source>
</evidence>
<organism>
    <name type="scientific">Drosophila melanogaster</name>
    <name type="common">Fruit fly</name>
    <dbReference type="NCBI Taxonomy" id="7227"/>
    <lineage>
        <taxon>Eukaryota</taxon>
        <taxon>Metazoa</taxon>
        <taxon>Ecdysozoa</taxon>
        <taxon>Arthropoda</taxon>
        <taxon>Hexapoda</taxon>
        <taxon>Insecta</taxon>
        <taxon>Pterygota</taxon>
        <taxon>Neoptera</taxon>
        <taxon>Endopterygota</taxon>
        <taxon>Diptera</taxon>
        <taxon>Brachycera</taxon>
        <taxon>Muscomorpha</taxon>
        <taxon>Ephydroidea</taxon>
        <taxon>Drosophilidae</taxon>
        <taxon>Drosophila</taxon>
        <taxon>Sophophora</taxon>
    </lineage>
</organism>
<proteinExistence type="evidence at protein level"/>
<name>HR4_DROME</name>